<organism>
    <name type="scientific">Caenorhabditis elegans</name>
    <dbReference type="NCBI Taxonomy" id="6239"/>
    <lineage>
        <taxon>Eukaryota</taxon>
        <taxon>Metazoa</taxon>
        <taxon>Ecdysozoa</taxon>
        <taxon>Nematoda</taxon>
        <taxon>Chromadorea</taxon>
        <taxon>Rhabditida</taxon>
        <taxon>Rhabditina</taxon>
        <taxon>Rhabditomorpha</taxon>
        <taxon>Rhabditoidea</taxon>
        <taxon>Rhabditidae</taxon>
        <taxon>Peloderinae</taxon>
        <taxon>Caenorhabditis</taxon>
    </lineage>
</organism>
<reference key="1">
    <citation type="journal article" date="1994" name="Nature">
        <title>2.2 Mb of contiguous nucleotide sequence from chromosome III of C. elegans.</title>
        <authorList>
            <person name="Wilson R."/>
            <person name="Ainscough R."/>
            <person name="Anderson K."/>
            <person name="Baynes C."/>
            <person name="Berks M."/>
            <person name="Bonfield J."/>
            <person name="Burton J."/>
            <person name="Connell M."/>
            <person name="Copsey T."/>
            <person name="Cooper J."/>
            <person name="Coulson A."/>
            <person name="Craxton M."/>
            <person name="Dear S."/>
            <person name="Du Z."/>
            <person name="Durbin R."/>
            <person name="Favello A."/>
            <person name="Fraser A."/>
            <person name="Fulton L."/>
            <person name="Gardner A."/>
            <person name="Green P."/>
            <person name="Hawkins T."/>
            <person name="Hillier L."/>
            <person name="Jier M."/>
            <person name="Johnston L."/>
            <person name="Jones M."/>
            <person name="Kershaw J."/>
            <person name="Kirsten J."/>
            <person name="Laisster N."/>
            <person name="Latreille P."/>
            <person name="Lightning J."/>
            <person name="Lloyd C."/>
            <person name="Mortimore B."/>
            <person name="O'Callaghan M."/>
            <person name="Parsons J."/>
            <person name="Percy C."/>
            <person name="Rifken L."/>
            <person name="Roopra A."/>
            <person name="Saunders D."/>
            <person name="Shownkeen R."/>
            <person name="Sims M."/>
            <person name="Smaldon N."/>
            <person name="Smith A."/>
            <person name="Smith M."/>
            <person name="Sonnhammer E."/>
            <person name="Staden R."/>
            <person name="Sulston J."/>
            <person name="Thierry-Mieg J."/>
            <person name="Thomas K."/>
            <person name="Vaudin M."/>
            <person name="Vaughan K."/>
            <person name="Waterston R."/>
            <person name="Watson A."/>
            <person name="Weinstock L."/>
            <person name="Wilkinson-Sproat J."/>
            <person name="Wohldman P."/>
        </authorList>
    </citation>
    <scope>NUCLEOTIDE SEQUENCE [LARGE SCALE GENOMIC DNA]</scope>
    <source>
        <strain>Bristol N2</strain>
    </source>
</reference>
<reference key="2">
    <citation type="journal article" date="1998" name="Science">
        <title>Genome sequence of the nematode C. elegans: a platform for investigating biology.</title>
        <authorList>
            <consortium name="The C. elegans sequencing consortium"/>
        </authorList>
    </citation>
    <scope>NUCLEOTIDE SEQUENCE [LARGE SCALE GENOMIC DNA]</scope>
    <source>
        <strain>Bristol N2</strain>
    </source>
</reference>
<keyword id="KW-1185">Reference proteome</keyword>
<proteinExistence type="predicted"/>
<dbReference type="EMBL" id="Z29115">
    <property type="protein sequence ID" value="CAA82361.1"/>
    <property type="molecule type" value="Genomic_DNA"/>
</dbReference>
<dbReference type="PIR" id="S40733">
    <property type="entry name" value="S40733"/>
</dbReference>
<dbReference type="RefSeq" id="NP_499071.1">
    <property type="nucleotide sequence ID" value="NM_066670.1"/>
</dbReference>
<dbReference type="STRING" id="6239.T26G10.4.1"/>
<dbReference type="PaxDb" id="6239-T26G10.4"/>
<dbReference type="EnsemblMetazoa" id="T26G10.4.1">
    <property type="protein sequence ID" value="T26G10.4.1"/>
    <property type="gene ID" value="WBGene00012061"/>
</dbReference>
<dbReference type="GeneID" id="188944"/>
<dbReference type="KEGG" id="cel:CELE_T26G10.4"/>
<dbReference type="UCSC" id="T26G10.4">
    <property type="organism name" value="c. elegans"/>
</dbReference>
<dbReference type="AGR" id="WB:WBGene00012061"/>
<dbReference type="CTD" id="188944"/>
<dbReference type="WormBase" id="T26G10.4">
    <property type="protein sequence ID" value="CE00340"/>
    <property type="gene ID" value="WBGene00012061"/>
</dbReference>
<dbReference type="eggNOG" id="KOG1075">
    <property type="taxonomic scope" value="Eukaryota"/>
</dbReference>
<dbReference type="HOGENOM" id="CLU_799820_0_0_1"/>
<dbReference type="InParanoid" id="P34583"/>
<dbReference type="OrthoDB" id="8195432at2759"/>
<dbReference type="PhylomeDB" id="P34583"/>
<dbReference type="PRO" id="PR:P34583"/>
<dbReference type="Proteomes" id="UP000001940">
    <property type="component" value="Chromosome III"/>
</dbReference>
<dbReference type="Bgee" id="WBGene00012061">
    <property type="expression patterns" value="Expressed in material anatomical entity and 1 other cell type or tissue"/>
</dbReference>
<sequence length="347" mass="39002">MKRGRGTAIAFHSTIFIFKPAKCATLVIERGVVREIPVKLKGRPINSLNKESTYKYLGIQTGAGAKVSTMGLLEKVTRELDCIVRSDLIPPQKLDCVKTFALSKLTYMNSNSMPPITEMRKFANIVMRAVKVIHSIPIRGSPLEYVQLPIKDGGLGVPCPRVTNMVTFVVSTMKKLWSPDNYIRNLYMSFAEEVVKMETGKKEVNLEDIAQYLNVEQRTVRSNFGYNCFSRLKDALRNLASGGDSPLFKIKIVVKNKKLAVLVQATEDSNEKLFTEDGVKKMQRAMNEQVSRALKHRFHTTKLVKSEISRVVQMHPASNKFVARGGNLSLACHRFVHKARLNLLACN</sequence>
<accession>P34583</accession>
<name>YN24_CAEEL</name>
<gene>
    <name type="ORF">T26G10.4</name>
</gene>
<feature type="chain" id="PRO_0000065482" description="Uncharacterized protein T26G10.4">
    <location>
        <begin position="1"/>
        <end position="347"/>
    </location>
</feature>
<protein>
    <recommendedName>
        <fullName>Uncharacterized protein T26G10.4</fullName>
    </recommendedName>
</protein>